<dbReference type="EMBL" id="CP000826">
    <property type="protein sequence ID" value="ABV40188.1"/>
    <property type="molecule type" value="Genomic_DNA"/>
</dbReference>
<dbReference type="SMR" id="A8GAP8"/>
<dbReference type="STRING" id="399741.Spro_1084"/>
<dbReference type="KEGG" id="spe:Spro_1084"/>
<dbReference type="eggNOG" id="COG1666">
    <property type="taxonomic scope" value="Bacteria"/>
</dbReference>
<dbReference type="HOGENOM" id="CLU_099839_1_0_6"/>
<dbReference type="OrthoDB" id="9801447at2"/>
<dbReference type="GO" id="GO:0005829">
    <property type="term" value="C:cytosol"/>
    <property type="evidence" value="ECO:0007669"/>
    <property type="project" value="TreeGrafter"/>
</dbReference>
<dbReference type="GO" id="GO:0000166">
    <property type="term" value="F:nucleotide binding"/>
    <property type="evidence" value="ECO:0007669"/>
    <property type="project" value="TreeGrafter"/>
</dbReference>
<dbReference type="CDD" id="cd11740">
    <property type="entry name" value="YajQ_like"/>
    <property type="match status" value="1"/>
</dbReference>
<dbReference type="FunFam" id="3.30.70.860:FF:000001">
    <property type="entry name" value="UPF0234 protein YajQ"/>
    <property type="match status" value="1"/>
</dbReference>
<dbReference type="FunFam" id="3.30.70.990:FF:000001">
    <property type="entry name" value="UPF0234 protein YajQ"/>
    <property type="match status" value="1"/>
</dbReference>
<dbReference type="Gene3D" id="3.30.70.860">
    <property type="match status" value="1"/>
</dbReference>
<dbReference type="Gene3D" id="3.30.70.990">
    <property type="entry name" value="YajQ-like, domain 2"/>
    <property type="match status" value="1"/>
</dbReference>
<dbReference type="HAMAP" id="MF_00632">
    <property type="entry name" value="YajQ"/>
    <property type="match status" value="1"/>
</dbReference>
<dbReference type="InterPro" id="IPR007551">
    <property type="entry name" value="DUF520"/>
</dbReference>
<dbReference type="InterPro" id="IPR035571">
    <property type="entry name" value="UPF0234-like_C"/>
</dbReference>
<dbReference type="InterPro" id="IPR035570">
    <property type="entry name" value="UPF0234_N"/>
</dbReference>
<dbReference type="InterPro" id="IPR036183">
    <property type="entry name" value="YajQ-like_sf"/>
</dbReference>
<dbReference type="NCBIfam" id="NF003819">
    <property type="entry name" value="PRK05412.1"/>
    <property type="match status" value="1"/>
</dbReference>
<dbReference type="PANTHER" id="PTHR30476">
    <property type="entry name" value="UPF0234 PROTEIN YAJQ"/>
    <property type="match status" value="1"/>
</dbReference>
<dbReference type="PANTHER" id="PTHR30476:SF0">
    <property type="entry name" value="UPF0234 PROTEIN YAJQ"/>
    <property type="match status" value="1"/>
</dbReference>
<dbReference type="Pfam" id="PF04461">
    <property type="entry name" value="DUF520"/>
    <property type="match status" value="1"/>
</dbReference>
<dbReference type="SUPFAM" id="SSF89963">
    <property type="entry name" value="YajQ-like"/>
    <property type="match status" value="2"/>
</dbReference>
<comment type="function">
    <text evidence="1">Nucleotide-binding protein.</text>
</comment>
<comment type="similarity">
    <text evidence="1">Belongs to the YajQ family.</text>
</comment>
<organism>
    <name type="scientific">Serratia proteamaculans (strain 568)</name>
    <dbReference type="NCBI Taxonomy" id="399741"/>
    <lineage>
        <taxon>Bacteria</taxon>
        <taxon>Pseudomonadati</taxon>
        <taxon>Pseudomonadota</taxon>
        <taxon>Gammaproteobacteria</taxon>
        <taxon>Enterobacterales</taxon>
        <taxon>Yersiniaceae</taxon>
        <taxon>Serratia</taxon>
    </lineage>
</organism>
<accession>A8GAP8</accession>
<keyword id="KW-0547">Nucleotide-binding</keyword>
<gene>
    <name type="ordered locus">Spro_1084</name>
</gene>
<protein>
    <recommendedName>
        <fullName evidence="1">Nucleotide-binding protein Spro_1084</fullName>
    </recommendedName>
</protein>
<feature type="chain" id="PRO_1000061405" description="Nucleotide-binding protein Spro_1084">
    <location>
        <begin position="1"/>
        <end position="163"/>
    </location>
</feature>
<evidence type="ECO:0000255" key="1">
    <source>
        <dbReference type="HAMAP-Rule" id="MF_00632"/>
    </source>
</evidence>
<name>Y1084_SERP5</name>
<reference key="1">
    <citation type="submission" date="2007-09" db="EMBL/GenBank/DDBJ databases">
        <title>Complete sequence of chromosome of Serratia proteamaculans 568.</title>
        <authorList>
            <consortium name="US DOE Joint Genome Institute"/>
            <person name="Copeland A."/>
            <person name="Lucas S."/>
            <person name="Lapidus A."/>
            <person name="Barry K."/>
            <person name="Glavina del Rio T."/>
            <person name="Dalin E."/>
            <person name="Tice H."/>
            <person name="Pitluck S."/>
            <person name="Chain P."/>
            <person name="Malfatti S."/>
            <person name="Shin M."/>
            <person name="Vergez L."/>
            <person name="Schmutz J."/>
            <person name="Larimer F."/>
            <person name="Land M."/>
            <person name="Hauser L."/>
            <person name="Kyrpides N."/>
            <person name="Kim E."/>
            <person name="Taghavi S."/>
            <person name="Newman L."/>
            <person name="Vangronsveld J."/>
            <person name="van der Lelie D."/>
            <person name="Richardson P."/>
        </authorList>
    </citation>
    <scope>NUCLEOTIDE SEQUENCE [LARGE SCALE GENOMIC DNA]</scope>
    <source>
        <strain>568</strain>
    </source>
</reference>
<sequence>MPSFDIVSEIDMQEVRNAVENATRDLGTRWDFRNVPASFELNEKDESIKVASESDFQVQQLLDILREKLSKRSIEGSALEIPEEMTHSGKTYSVDAKLKQGIESAQAKKLVKLIKDSKLKVQVQIQGDEVRVTGKSRDDLQGVMALVRGADLGQPFQFKNFRD</sequence>
<proteinExistence type="inferred from homology"/>